<comment type="function">
    <text evidence="1">Produces ATP from ADP in the presence of a proton gradient across the membrane.</text>
</comment>
<comment type="subunit">
    <text evidence="1">F-type ATPases have 2 components, CF(1) - the catalytic core - and CF(0) - the membrane proton channel. CF(1) has five subunits: alpha(3), beta(3), gamma(1), delta(1), epsilon(1). CF(0) has three main subunits: a, b and c.</text>
</comment>
<comment type="subcellular location">
    <subcellularLocation>
        <location evidence="1">Cell inner membrane</location>
        <topology evidence="1">Peripheral membrane protein</topology>
    </subcellularLocation>
</comment>
<comment type="similarity">
    <text evidence="1">Belongs to the ATPase epsilon chain family.</text>
</comment>
<feature type="chain" id="PRO_1000056486" description="ATP synthase epsilon chain">
    <location>
        <begin position="1"/>
        <end position="142"/>
    </location>
</feature>
<name>ATPE_HAEIE</name>
<protein>
    <recommendedName>
        <fullName evidence="1">ATP synthase epsilon chain</fullName>
    </recommendedName>
    <alternativeName>
        <fullName evidence="1">ATP synthase F1 sector epsilon subunit</fullName>
    </alternativeName>
    <alternativeName>
        <fullName evidence="1">F-ATPase epsilon subunit</fullName>
    </alternativeName>
</protein>
<accession>A5UA12</accession>
<proteinExistence type="inferred from homology"/>
<dbReference type="EMBL" id="CP000671">
    <property type="protein sequence ID" value="ABQ97613.1"/>
    <property type="molecule type" value="Genomic_DNA"/>
</dbReference>
<dbReference type="SMR" id="A5UA12"/>
<dbReference type="KEGG" id="hip:CGSHiEE_00595"/>
<dbReference type="HOGENOM" id="CLU_084338_2_0_6"/>
<dbReference type="GO" id="GO:0005886">
    <property type="term" value="C:plasma membrane"/>
    <property type="evidence" value="ECO:0007669"/>
    <property type="project" value="UniProtKB-SubCell"/>
</dbReference>
<dbReference type="GO" id="GO:0045259">
    <property type="term" value="C:proton-transporting ATP synthase complex"/>
    <property type="evidence" value="ECO:0007669"/>
    <property type="project" value="UniProtKB-KW"/>
</dbReference>
<dbReference type="GO" id="GO:0005524">
    <property type="term" value="F:ATP binding"/>
    <property type="evidence" value="ECO:0007669"/>
    <property type="project" value="UniProtKB-UniRule"/>
</dbReference>
<dbReference type="GO" id="GO:0046933">
    <property type="term" value="F:proton-transporting ATP synthase activity, rotational mechanism"/>
    <property type="evidence" value="ECO:0007669"/>
    <property type="project" value="UniProtKB-UniRule"/>
</dbReference>
<dbReference type="CDD" id="cd12152">
    <property type="entry name" value="F1-ATPase_delta"/>
    <property type="match status" value="1"/>
</dbReference>
<dbReference type="FunFam" id="2.60.15.10:FF:000001">
    <property type="entry name" value="ATP synthase epsilon chain"/>
    <property type="match status" value="1"/>
</dbReference>
<dbReference type="Gene3D" id="1.20.5.440">
    <property type="entry name" value="ATP synthase delta/epsilon subunit, C-terminal domain"/>
    <property type="match status" value="1"/>
</dbReference>
<dbReference type="Gene3D" id="2.60.15.10">
    <property type="entry name" value="F0F1 ATP synthase delta/epsilon subunit, N-terminal"/>
    <property type="match status" value="1"/>
</dbReference>
<dbReference type="HAMAP" id="MF_00530">
    <property type="entry name" value="ATP_synth_epsil_bac"/>
    <property type="match status" value="1"/>
</dbReference>
<dbReference type="InterPro" id="IPR036794">
    <property type="entry name" value="ATP_F1_dsu/esu_C_sf"/>
</dbReference>
<dbReference type="InterPro" id="IPR001469">
    <property type="entry name" value="ATP_synth_F1_dsu/esu"/>
</dbReference>
<dbReference type="InterPro" id="IPR020546">
    <property type="entry name" value="ATP_synth_F1_dsu/esu_N"/>
</dbReference>
<dbReference type="InterPro" id="IPR036771">
    <property type="entry name" value="ATPsynth_dsu/esu_N"/>
</dbReference>
<dbReference type="NCBIfam" id="TIGR01216">
    <property type="entry name" value="ATP_synt_epsi"/>
    <property type="match status" value="1"/>
</dbReference>
<dbReference type="NCBIfam" id="NF001847">
    <property type="entry name" value="PRK00571.1-4"/>
    <property type="match status" value="1"/>
</dbReference>
<dbReference type="PANTHER" id="PTHR13822">
    <property type="entry name" value="ATP SYNTHASE DELTA/EPSILON CHAIN"/>
    <property type="match status" value="1"/>
</dbReference>
<dbReference type="PANTHER" id="PTHR13822:SF10">
    <property type="entry name" value="ATP SYNTHASE EPSILON CHAIN, CHLOROPLASTIC"/>
    <property type="match status" value="1"/>
</dbReference>
<dbReference type="Pfam" id="PF02823">
    <property type="entry name" value="ATP-synt_DE_N"/>
    <property type="match status" value="1"/>
</dbReference>
<dbReference type="SUPFAM" id="SSF46604">
    <property type="entry name" value="Epsilon subunit of F1F0-ATP synthase C-terminal domain"/>
    <property type="match status" value="1"/>
</dbReference>
<dbReference type="SUPFAM" id="SSF51344">
    <property type="entry name" value="Epsilon subunit of F1F0-ATP synthase N-terminal domain"/>
    <property type="match status" value="1"/>
</dbReference>
<keyword id="KW-0066">ATP synthesis</keyword>
<keyword id="KW-0997">Cell inner membrane</keyword>
<keyword id="KW-1003">Cell membrane</keyword>
<keyword id="KW-0139">CF(1)</keyword>
<keyword id="KW-0375">Hydrogen ion transport</keyword>
<keyword id="KW-0406">Ion transport</keyword>
<keyword id="KW-0472">Membrane</keyword>
<keyword id="KW-0813">Transport</keyword>
<gene>
    <name evidence="1" type="primary">atpC</name>
    <name type="ordered locus">CGSHiEE_00595</name>
</gene>
<evidence type="ECO:0000255" key="1">
    <source>
        <dbReference type="HAMAP-Rule" id="MF_00530"/>
    </source>
</evidence>
<reference key="1">
    <citation type="journal article" date="2007" name="Genome Biol.">
        <title>Characterization and modeling of the Haemophilus influenzae core and supragenomes based on the complete genomic sequences of Rd and 12 clinical nontypeable strains.</title>
        <authorList>
            <person name="Hogg J.S."/>
            <person name="Hu F.Z."/>
            <person name="Janto B."/>
            <person name="Boissy R."/>
            <person name="Hayes J."/>
            <person name="Keefe R."/>
            <person name="Post J.C."/>
            <person name="Ehrlich G.D."/>
        </authorList>
    </citation>
    <scope>NUCLEOTIDE SEQUENCE [LARGE SCALE GENOMIC DNA]</scope>
    <source>
        <strain>PittEE</strain>
    </source>
</reference>
<sequence>MATFNLTIVSAEQKIFEGEVKQIQVTGVEGELGILPGHTPLLTAIKPGIVKFTLKDGNEEVIYVSGGFLEVQPNIVTVLADIAIRGSELDADRIHEAKRKAEENIVSRGSDADHDLLVAKLSKELAKLRAYELTEKLLKTRR</sequence>
<organism>
    <name type="scientific">Haemophilus influenzae (strain PittEE)</name>
    <dbReference type="NCBI Taxonomy" id="374930"/>
    <lineage>
        <taxon>Bacteria</taxon>
        <taxon>Pseudomonadati</taxon>
        <taxon>Pseudomonadota</taxon>
        <taxon>Gammaproteobacteria</taxon>
        <taxon>Pasteurellales</taxon>
        <taxon>Pasteurellaceae</taxon>
        <taxon>Haemophilus</taxon>
    </lineage>
</organism>